<feature type="chain" id="PRO_1000062196" description="UPF0301 protein KPN78578_33170">
    <location>
        <begin position="1"/>
        <end position="187"/>
    </location>
</feature>
<evidence type="ECO:0000255" key="1">
    <source>
        <dbReference type="HAMAP-Rule" id="MF_00758"/>
    </source>
</evidence>
<protein>
    <recommendedName>
        <fullName evidence="1">UPF0301 protein KPN78578_33170</fullName>
    </recommendedName>
</protein>
<reference key="1">
    <citation type="submission" date="2006-09" db="EMBL/GenBank/DDBJ databases">
        <authorList>
            <consortium name="The Klebsiella pneumonia Genome Sequencing Project"/>
            <person name="McClelland M."/>
            <person name="Sanderson E.K."/>
            <person name="Spieth J."/>
            <person name="Clifton W.S."/>
            <person name="Latreille P."/>
            <person name="Sabo A."/>
            <person name="Pepin K."/>
            <person name="Bhonagiri V."/>
            <person name="Porwollik S."/>
            <person name="Ali J."/>
            <person name="Wilson R.K."/>
        </authorList>
    </citation>
    <scope>NUCLEOTIDE SEQUENCE [LARGE SCALE GENOMIC DNA]</scope>
    <source>
        <strain>ATCC 700721 / MGH 78578</strain>
    </source>
</reference>
<proteinExistence type="inferred from homology"/>
<gene>
    <name type="ordered locus">KPN78578_33170</name>
    <name type="ORF">KPN_03381</name>
</gene>
<dbReference type="EMBL" id="CP000647">
    <property type="protein sequence ID" value="ABR78778.1"/>
    <property type="molecule type" value="Genomic_DNA"/>
</dbReference>
<dbReference type="RefSeq" id="WP_002916603.1">
    <property type="nucleotide sequence ID" value="NC_009648.1"/>
</dbReference>
<dbReference type="SMR" id="A6TDV7"/>
<dbReference type="STRING" id="272620.KPN_03381"/>
<dbReference type="jPOST" id="A6TDV7"/>
<dbReference type="PaxDb" id="272620-KPN_03381"/>
<dbReference type="EnsemblBacteria" id="ABR78778">
    <property type="protein sequence ID" value="ABR78778"/>
    <property type="gene ID" value="KPN_03381"/>
</dbReference>
<dbReference type="KEGG" id="kpn:KPN_03381"/>
<dbReference type="HOGENOM" id="CLU_057596_1_0_6"/>
<dbReference type="Proteomes" id="UP000000265">
    <property type="component" value="Chromosome"/>
</dbReference>
<dbReference type="GO" id="GO:0005829">
    <property type="term" value="C:cytosol"/>
    <property type="evidence" value="ECO:0007669"/>
    <property type="project" value="TreeGrafter"/>
</dbReference>
<dbReference type="Gene3D" id="3.40.1740.10">
    <property type="entry name" value="VC0467-like"/>
    <property type="match status" value="1"/>
</dbReference>
<dbReference type="Gene3D" id="3.30.70.1300">
    <property type="entry name" value="VC0467-like domains"/>
    <property type="match status" value="1"/>
</dbReference>
<dbReference type="HAMAP" id="MF_00758">
    <property type="entry name" value="UPF0301"/>
    <property type="match status" value="1"/>
</dbReference>
<dbReference type="InterPro" id="IPR003774">
    <property type="entry name" value="AlgH-like"/>
</dbReference>
<dbReference type="NCBIfam" id="NF001266">
    <property type="entry name" value="PRK00228.1-1"/>
    <property type="match status" value="1"/>
</dbReference>
<dbReference type="PANTHER" id="PTHR30327">
    <property type="entry name" value="UNCHARACTERIZED PROTEIN YQGE"/>
    <property type="match status" value="1"/>
</dbReference>
<dbReference type="PANTHER" id="PTHR30327:SF1">
    <property type="entry name" value="UPF0301 PROTEIN YQGE"/>
    <property type="match status" value="1"/>
</dbReference>
<dbReference type="Pfam" id="PF02622">
    <property type="entry name" value="DUF179"/>
    <property type="match status" value="1"/>
</dbReference>
<dbReference type="SUPFAM" id="SSF143456">
    <property type="entry name" value="VC0467-like"/>
    <property type="match status" value="1"/>
</dbReference>
<name>Y3317_KLEP7</name>
<sequence length="187" mass="20803">MNLQHHFLIAMPALQDPIFRRSVVYICEYNDEGAMGIIINKPLENLQVEGILEKLKIVPEPRNPEIRLDKPVMLGGPLAEDRGFILHTPPSDFSSSIRISDNTVITTSRDVLETLGTDRQPGNVLVALGYSSWEKGQLEQEILDNAWLTAPADQNILFRTPIADRWREAAKLIGIDIVTMPGVAGHA</sequence>
<accession>A6TDV7</accession>
<comment type="similarity">
    <text evidence="1">Belongs to the UPF0301 (AlgH) family.</text>
</comment>
<organism>
    <name type="scientific">Klebsiella pneumoniae subsp. pneumoniae (strain ATCC 700721 / MGH 78578)</name>
    <dbReference type="NCBI Taxonomy" id="272620"/>
    <lineage>
        <taxon>Bacteria</taxon>
        <taxon>Pseudomonadati</taxon>
        <taxon>Pseudomonadota</taxon>
        <taxon>Gammaproteobacteria</taxon>
        <taxon>Enterobacterales</taxon>
        <taxon>Enterobacteriaceae</taxon>
        <taxon>Klebsiella/Raoultella group</taxon>
        <taxon>Klebsiella</taxon>
        <taxon>Klebsiella pneumoniae complex</taxon>
    </lineage>
</organism>